<comment type="function">
    <text evidence="1">IGPS catalyzes the conversion of PRFAR and glutamine to IGP, AICAR and glutamate. The HisF subunit catalyzes the cyclization activity that produces IGP and AICAR from PRFAR using the ammonia provided by the HisH subunit.</text>
</comment>
<comment type="catalytic activity">
    <reaction evidence="1">
        <text>5-[(5-phospho-1-deoxy-D-ribulos-1-ylimino)methylamino]-1-(5-phospho-beta-D-ribosyl)imidazole-4-carboxamide + L-glutamine = D-erythro-1-(imidazol-4-yl)glycerol 3-phosphate + 5-amino-1-(5-phospho-beta-D-ribosyl)imidazole-4-carboxamide + L-glutamate + H(+)</text>
        <dbReference type="Rhea" id="RHEA:24793"/>
        <dbReference type="ChEBI" id="CHEBI:15378"/>
        <dbReference type="ChEBI" id="CHEBI:29985"/>
        <dbReference type="ChEBI" id="CHEBI:58278"/>
        <dbReference type="ChEBI" id="CHEBI:58359"/>
        <dbReference type="ChEBI" id="CHEBI:58475"/>
        <dbReference type="ChEBI" id="CHEBI:58525"/>
        <dbReference type="EC" id="4.3.2.10"/>
    </reaction>
</comment>
<comment type="pathway">
    <text evidence="1">Amino-acid biosynthesis; L-histidine biosynthesis; L-histidine from 5-phospho-alpha-D-ribose 1-diphosphate: step 5/9.</text>
</comment>
<comment type="subunit">
    <text evidence="1">Heterodimer of HisH and HisF.</text>
</comment>
<comment type="subcellular location">
    <subcellularLocation>
        <location evidence="1">Cytoplasm</location>
    </subcellularLocation>
</comment>
<comment type="similarity">
    <text evidence="1">Belongs to the HisA/HisF family.</text>
</comment>
<organism>
    <name type="scientific">Pelodictyon phaeoclathratiforme (strain DSM 5477 / BU-1)</name>
    <dbReference type="NCBI Taxonomy" id="324925"/>
    <lineage>
        <taxon>Bacteria</taxon>
        <taxon>Pseudomonadati</taxon>
        <taxon>Chlorobiota</taxon>
        <taxon>Chlorobiia</taxon>
        <taxon>Chlorobiales</taxon>
        <taxon>Chlorobiaceae</taxon>
        <taxon>Chlorobium/Pelodictyon group</taxon>
        <taxon>Pelodictyon</taxon>
    </lineage>
</organism>
<dbReference type="EC" id="4.3.2.10" evidence="1"/>
<dbReference type="EMBL" id="CP001110">
    <property type="protein sequence ID" value="ACF43282.1"/>
    <property type="molecule type" value="Genomic_DNA"/>
</dbReference>
<dbReference type="RefSeq" id="WP_012507776.1">
    <property type="nucleotide sequence ID" value="NC_011060.1"/>
</dbReference>
<dbReference type="SMR" id="B4SFM7"/>
<dbReference type="STRING" id="324925.Ppha_0998"/>
<dbReference type="KEGG" id="pph:Ppha_0998"/>
<dbReference type="eggNOG" id="COG0107">
    <property type="taxonomic scope" value="Bacteria"/>
</dbReference>
<dbReference type="HOGENOM" id="CLU_048577_4_0_10"/>
<dbReference type="OrthoDB" id="9781903at2"/>
<dbReference type="UniPathway" id="UPA00031">
    <property type="reaction ID" value="UER00010"/>
</dbReference>
<dbReference type="Proteomes" id="UP000002724">
    <property type="component" value="Chromosome"/>
</dbReference>
<dbReference type="GO" id="GO:0005737">
    <property type="term" value="C:cytoplasm"/>
    <property type="evidence" value="ECO:0007669"/>
    <property type="project" value="UniProtKB-SubCell"/>
</dbReference>
<dbReference type="GO" id="GO:0000107">
    <property type="term" value="F:imidazoleglycerol-phosphate synthase activity"/>
    <property type="evidence" value="ECO:0007669"/>
    <property type="project" value="UniProtKB-UniRule"/>
</dbReference>
<dbReference type="GO" id="GO:0016829">
    <property type="term" value="F:lyase activity"/>
    <property type="evidence" value="ECO:0007669"/>
    <property type="project" value="UniProtKB-KW"/>
</dbReference>
<dbReference type="GO" id="GO:0000105">
    <property type="term" value="P:L-histidine biosynthetic process"/>
    <property type="evidence" value="ECO:0007669"/>
    <property type="project" value="UniProtKB-UniRule"/>
</dbReference>
<dbReference type="CDD" id="cd04731">
    <property type="entry name" value="HisF"/>
    <property type="match status" value="1"/>
</dbReference>
<dbReference type="FunFam" id="3.20.20.70:FF:000006">
    <property type="entry name" value="Imidazole glycerol phosphate synthase subunit HisF"/>
    <property type="match status" value="1"/>
</dbReference>
<dbReference type="Gene3D" id="3.20.20.70">
    <property type="entry name" value="Aldolase class I"/>
    <property type="match status" value="1"/>
</dbReference>
<dbReference type="HAMAP" id="MF_01013">
    <property type="entry name" value="HisF"/>
    <property type="match status" value="1"/>
</dbReference>
<dbReference type="InterPro" id="IPR013785">
    <property type="entry name" value="Aldolase_TIM"/>
</dbReference>
<dbReference type="InterPro" id="IPR006062">
    <property type="entry name" value="His_biosynth"/>
</dbReference>
<dbReference type="InterPro" id="IPR004651">
    <property type="entry name" value="HisF"/>
</dbReference>
<dbReference type="InterPro" id="IPR050064">
    <property type="entry name" value="IGPS_HisA/HisF"/>
</dbReference>
<dbReference type="InterPro" id="IPR011060">
    <property type="entry name" value="RibuloseP-bd_barrel"/>
</dbReference>
<dbReference type="NCBIfam" id="TIGR00735">
    <property type="entry name" value="hisF"/>
    <property type="match status" value="1"/>
</dbReference>
<dbReference type="PANTHER" id="PTHR21235:SF2">
    <property type="entry name" value="IMIDAZOLE GLYCEROL PHOSPHATE SYNTHASE HISHF"/>
    <property type="match status" value="1"/>
</dbReference>
<dbReference type="PANTHER" id="PTHR21235">
    <property type="entry name" value="IMIDAZOLE GLYCEROL PHOSPHATE SYNTHASE SUBUNIT HISF/H IGP SYNTHASE SUBUNIT HISF/H"/>
    <property type="match status" value="1"/>
</dbReference>
<dbReference type="Pfam" id="PF00977">
    <property type="entry name" value="His_biosynth"/>
    <property type="match status" value="1"/>
</dbReference>
<dbReference type="SUPFAM" id="SSF51366">
    <property type="entry name" value="Ribulose-phoshate binding barrel"/>
    <property type="match status" value="1"/>
</dbReference>
<protein>
    <recommendedName>
        <fullName evidence="1">Imidazole glycerol phosphate synthase subunit HisF</fullName>
        <ecNumber evidence="1">4.3.2.10</ecNumber>
    </recommendedName>
    <alternativeName>
        <fullName evidence="1">IGP synthase cyclase subunit</fullName>
    </alternativeName>
    <alternativeName>
        <fullName evidence="1">IGP synthase subunit HisF</fullName>
    </alternativeName>
    <alternativeName>
        <fullName evidence="1">ImGP synthase subunit HisF</fullName>
        <shortName evidence="1">IGPS subunit HisF</shortName>
    </alternativeName>
</protein>
<keyword id="KW-0028">Amino-acid biosynthesis</keyword>
<keyword id="KW-0963">Cytoplasm</keyword>
<keyword id="KW-0368">Histidine biosynthesis</keyword>
<keyword id="KW-0456">Lyase</keyword>
<keyword id="KW-1185">Reference proteome</keyword>
<name>HIS6_PELPB</name>
<accession>B4SFM7</accession>
<sequence>MLAKRIIPCLDVRDGRVVKGINFEGLRDAGSILEQARFYNNELADELVFLDISASLESRKTTLEEVLKVSGEIFIPLTVGGGINSVERAREVFLHGADKVSVNTAAVNDPFLITRIAERYGSQAVVVAIDIKKTGEDYLVFTHSGKKPTCYEALEWAHKVQELGAGEILLTSMDRDGTKEGYDNDILAKISTSVHIPVIASGGAGNLEHLYDGFTKGHADAALAASIFHFRQHSIREAKEYLRQRGITVRI</sequence>
<feature type="chain" id="PRO_1000190588" description="Imidazole glycerol phosphate synthase subunit HisF">
    <location>
        <begin position="1"/>
        <end position="251"/>
    </location>
</feature>
<feature type="active site" evidence="1">
    <location>
        <position position="11"/>
    </location>
</feature>
<feature type="active site" evidence="1">
    <location>
        <position position="130"/>
    </location>
</feature>
<reference key="1">
    <citation type="submission" date="2008-06" db="EMBL/GenBank/DDBJ databases">
        <title>Complete sequence of Pelodictyon phaeoclathratiforme BU-1.</title>
        <authorList>
            <consortium name="US DOE Joint Genome Institute"/>
            <person name="Lucas S."/>
            <person name="Copeland A."/>
            <person name="Lapidus A."/>
            <person name="Glavina del Rio T."/>
            <person name="Dalin E."/>
            <person name="Tice H."/>
            <person name="Bruce D."/>
            <person name="Goodwin L."/>
            <person name="Pitluck S."/>
            <person name="Schmutz J."/>
            <person name="Larimer F."/>
            <person name="Land M."/>
            <person name="Hauser L."/>
            <person name="Kyrpides N."/>
            <person name="Mikhailova N."/>
            <person name="Liu Z."/>
            <person name="Li T."/>
            <person name="Zhao F."/>
            <person name="Overmann J."/>
            <person name="Bryant D.A."/>
            <person name="Richardson P."/>
        </authorList>
    </citation>
    <scope>NUCLEOTIDE SEQUENCE [LARGE SCALE GENOMIC DNA]</scope>
    <source>
        <strain>DSM 5477 / BU-1</strain>
    </source>
</reference>
<proteinExistence type="inferred from homology"/>
<gene>
    <name evidence="1" type="primary">hisF</name>
    <name type="ordered locus">Ppha_0998</name>
</gene>
<evidence type="ECO:0000255" key="1">
    <source>
        <dbReference type="HAMAP-Rule" id="MF_01013"/>
    </source>
</evidence>